<protein>
    <recommendedName>
        <fullName>Conotoxin TxMEKL-011</fullName>
    </recommendedName>
</protein>
<organism>
    <name type="scientific">Conus textile</name>
    <name type="common">Cloth-of-gold cone</name>
    <dbReference type="NCBI Taxonomy" id="6494"/>
    <lineage>
        <taxon>Eukaryota</taxon>
        <taxon>Metazoa</taxon>
        <taxon>Spiralia</taxon>
        <taxon>Lophotrochozoa</taxon>
        <taxon>Mollusca</taxon>
        <taxon>Gastropoda</taxon>
        <taxon>Caenogastropoda</taxon>
        <taxon>Neogastropoda</taxon>
        <taxon>Conoidea</taxon>
        <taxon>Conidae</taxon>
        <taxon>Conus</taxon>
        <taxon>Cylinder</taxon>
    </lineage>
</organism>
<evidence type="ECO:0000250" key="1"/>
<evidence type="ECO:0000255" key="2"/>
<evidence type="ECO:0000305" key="3"/>
<name>O2611_CONTE</name>
<accession>Q9BPB7</accession>
<dbReference type="EMBL" id="AF215017">
    <property type="protein sequence ID" value="AAG60445.1"/>
    <property type="molecule type" value="mRNA"/>
</dbReference>
<dbReference type="SMR" id="Q9BPB7"/>
<dbReference type="ConoServer" id="704">
    <property type="toxin name" value="TxMEKL-011 precursor"/>
</dbReference>
<dbReference type="GO" id="GO:0005576">
    <property type="term" value="C:extracellular region"/>
    <property type="evidence" value="ECO:0007669"/>
    <property type="project" value="UniProtKB-SubCell"/>
</dbReference>
<dbReference type="GO" id="GO:0008200">
    <property type="term" value="F:ion channel inhibitor activity"/>
    <property type="evidence" value="ECO:0007669"/>
    <property type="project" value="InterPro"/>
</dbReference>
<dbReference type="GO" id="GO:0090729">
    <property type="term" value="F:toxin activity"/>
    <property type="evidence" value="ECO:0007669"/>
    <property type="project" value="UniProtKB-KW"/>
</dbReference>
<dbReference type="InterPro" id="IPR004214">
    <property type="entry name" value="Conotoxin"/>
</dbReference>
<dbReference type="Pfam" id="PF02950">
    <property type="entry name" value="Conotoxin"/>
    <property type="match status" value="1"/>
</dbReference>
<keyword id="KW-1015">Disulfide bond</keyword>
<keyword id="KW-0960">Knottin</keyword>
<keyword id="KW-0528">Neurotoxin</keyword>
<keyword id="KW-0964">Secreted</keyword>
<keyword id="KW-0732">Signal</keyword>
<keyword id="KW-0800">Toxin</keyword>
<comment type="subcellular location">
    <subcellularLocation>
        <location evidence="1">Secreted</location>
    </subcellularLocation>
</comment>
<comment type="tissue specificity">
    <text>Expressed by the venom duct.</text>
</comment>
<comment type="domain">
    <text evidence="1">The presence of a 'disulfide through disulfide knot' structurally defines this protein as a knottin.</text>
</comment>
<comment type="domain">
    <text>The cysteine framework is VI/VII (C-C-CC-C-C).</text>
</comment>
<comment type="similarity">
    <text evidence="3">Belongs to the conotoxin O2 superfamily.</text>
</comment>
<feature type="signal peptide" evidence="2">
    <location>
        <begin position="1"/>
        <end position="19"/>
    </location>
</feature>
<feature type="propeptide" id="PRO_0000404798" evidence="1">
    <location>
        <begin position="20"/>
        <end position="45"/>
    </location>
</feature>
<feature type="peptide" id="PRO_0000404799" description="Conotoxin TxMEKL-011">
    <location>
        <begin position="46"/>
        <end position="76"/>
    </location>
</feature>
<feature type="disulfide bond" evidence="1">
    <location>
        <begin position="51"/>
        <end position="65"/>
    </location>
</feature>
<feature type="disulfide bond" evidence="1">
    <location>
        <begin position="58"/>
        <end position="69"/>
    </location>
</feature>
<feature type="disulfide bond" evidence="1">
    <location>
        <begin position="64"/>
        <end position="73"/>
    </location>
</feature>
<reference key="1">
    <citation type="journal article" date="2001" name="Mol. Biol. Evol.">
        <title>Mechanisms for evolving hypervariability: the case of conopeptides.</title>
        <authorList>
            <person name="Conticello S.G."/>
            <person name="Gilad Y."/>
            <person name="Avidan N."/>
            <person name="Ben-Asher E."/>
            <person name="Levy Z."/>
            <person name="Fainzilber M."/>
        </authorList>
    </citation>
    <scope>NUCLEOTIDE SEQUENCE [MRNA]</scope>
    <source>
        <tissue>Venom duct</tissue>
    </source>
</reference>
<sequence length="76" mass="8493">MEKLTILLLVAAVLMSTQALVERAGENRSKENIKFLLKRKRAADRGMWGKCKDGLTTCLAPSECCSGNCEQNCKMW</sequence>
<proteinExistence type="evidence at transcript level"/>